<comment type="function">
    <text evidence="3">Involved in beta-(1--&gt;2)glucan export which is required for nodulation of legume roots. May be involved in other classes of oligosaccharides export. Transmembrane domains (TMD) form a pore in the inner membrane and the ATP-binding domain (NBD) is responsible for energy generation (Probable).</text>
</comment>
<comment type="catalytic activity">
    <reaction evidence="1">
        <text>[(1-&gt;2)-beta-D-glucosyl](n)(in) + ATP + H2O = [(1-&gt;2)-beta-D-glucosyl](n)(out) + ADP + phosphate + H(+)</text>
        <dbReference type="Rhea" id="RHEA:18453"/>
        <dbReference type="Rhea" id="RHEA-COMP:11881"/>
        <dbReference type="ChEBI" id="CHEBI:15377"/>
        <dbReference type="ChEBI" id="CHEBI:15378"/>
        <dbReference type="ChEBI" id="CHEBI:27517"/>
        <dbReference type="ChEBI" id="CHEBI:30616"/>
        <dbReference type="ChEBI" id="CHEBI:43474"/>
        <dbReference type="ChEBI" id="CHEBI:456216"/>
        <dbReference type="EC" id="7.5.2.3"/>
    </reaction>
</comment>
<comment type="subunit">
    <text evidence="1">Homodimer.</text>
</comment>
<comment type="subcellular location">
    <subcellularLocation>
        <location evidence="1">Cell inner membrane</location>
        <topology evidence="1">Multi-pass membrane protein</topology>
    </subcellularLocation>
</comment>
<comment type="domain">
    <text>In NdvA the ATP-binding domain (NBD) and the transmembrane domain (TMD) are fused.</text>
</comment>
<comment type="similarity">
    <text evidence="1">Belongs to the ABC transporter superfamily. Beta-(1--&gt;2)glucan exporter (TC 3.A.1.108.1) family.</text>
</comment>
<comment type="sequence caution" evidence="2">
    <conflict type="erroneous initiation">
        <sequence resource="EMBL-CDS" id="AAA26304"/>
    </conflict>
</comment>
<comment type="sequence caution" evidence="2">
    <conflict type="erroneous initiation">
        <sequence resource="EMBL-CDS" id="CAC47862"/>
    </conflict>
</comment>
<protein>
    <recommendedName>
        <fullName evidence="1">Beta-(1--&gt;2)glucan export ATP-binding/permease protein NdvA</fullName>
        <ecNumber evidence="1">7.5.2.3</ecNumber>
    </recommendedName>
</protein>
<gene>
    <name evidence="1" type="primary">ndvA</name>
    <name type="ordered locus">R03283</name>
    <name type="ORF">SMc03900</name>
</gene>
<evidence type="ECO:0000255" key="1">
    <source>
        <dbReference type="HAMAP-Rule" id="MF_01728"/>
    </source>
</evidence>
<evidence type="ECO:0000305" key="2"/>
<evidence type="ECO:0000305" key="3">
    <source>
    </source>
</evidence>
<sequence>MSLFQVYARALQYLAVHKFRVGAIVIANIVLAAITIAEPILFGRIIDAISSQKDVAPMLLLWAGFGVFNTIAFVLVSREADRLAHGRRASLLTEAFGRIVSMPLSWHSQRGTSNALHTLLRACETLFGLWLEFMRQHLATAVALMLLIPTAFAMDVRLSLILVVLGAAYVMISKVVMSRTKEGQAAVEGHYHTVFSHVSDSISNVSVVHSYNRIEAETRELKKFTQRLLSAQYPVLDWWALASGLNRIASTISMMAILVIGTVLVQRGELGVGEVIAFIGFANLLIGRLDQMKAFATQIFEARAKLEDFFQLEDSVQDREEPADAGELKGVVGEVEFRDISFDFANSAQGVRNVSFKAKAGQTIAIVGPTGAGKTTLVNLLQRVHEPKHGQILIDGVDIATVTRKSLRRSIATVFQDAGLMNRSIGENIRLGREDASLDEVMAAAEAAAASDFIEDRLNGYDTVVGERGNRLSGGERQRVAIARAILKNAPILVLDEATSALDVETEARVKDAIDALRKDRTTFIIAHRLSTVREADLVIFMDQGRVVEMGGFHELSQSNGRFAALLRASGILTDEDVRKSLTAA</sequence>
<name>NDVA_RHIME</name>
<accession>P18767</accession>
<reference key="1">
    <citation type="journal article" date="1988" name="J. Bacteriol.">
        <title>The ndvA gene product of Rhizobium meliloti is required for beta-(1--&gt;2)glucan production and has homology to the ATP-binding export protein HlyB.</title>
        <authorList>
            <person name="Stanfield S.W."/>
            <person name="Ielpi L."/>
            <person name="O'Brochta D."/>
            <person name="Helinski D.R."/>
            <person name="Ditta G.S."/>
        </authorList>
    </citation>
    <scope>NUCLEOTIDE SEQUENCE [GENOMIC DNA]</scope>
    <scope>FUNCTION IN BETA-(1-&gt;2)GLUCAN TRANSPORT</scope>
    <source>
        <strain>102F34</strain>
    </source>
</reference>
<reference key="2">
    <citation type="journal article" date="2001" name="Proc. Natl. Acad. Sci. U.S.A.">
        <title>Analysis of the chromosome sequence of the legume symbiont Sinorhizobium meliloti strain 1021.</title>
        <authorList>
            <person name="Capela D."/>
            <person name="Barloy-Hubler F."/>
            <person name="Gouzy J."/>
            <person name="Bothe G."/>
            <person name="Ampe F."/>
            <person name="Batut J."/>
            <person name="Boistard P."/>
            <person name="Becker A."/>
            <person name="Boutry M."/>
            <person name="Cadieu E."/>
            <person name="Dreano S."/>
            <person name="Gloux S."/>
            <person name="Godrie T."/>
            <person name="Goffeau A."/>
            <person name="Kahn D."/>
            <person name="Kiss E."/>
            <person name="Lelaure V."/>
            <person name="Masuy D."/>
            <person name="Pohl T."/>
            <person name="Portetelle D."/>
            <person name="Puehler A."/>
            <person name="Purnelle B."/>
            <person name="Ramsperger U."/>
            <person name="Renard C."/>
            <person name="Thebault P."/>
            <person name="Vandenbol M."/>
            <person name="Weidner S."/>
            <person name="Galibert F."/>
        </authorList>
    </citation>
    <scope>NUCLEOTIDE SEQUENCE [LARGE SCALE GENOMIC DNA]</scope>
    <source>
        <strain>1021</strain>
    </source>
</reference>
<reference key="3">
    <citation type="journal article" date="2001" name="Science">
        <title>The composite genome of the legume symbiont Sinorhizobium meliloti.</title>
        <authorList>
            <person name="Galibert F."/>
            <person name="Finan T.M."/>
            <person name="Long S.R."/>
            <person name="Puehler A."/>
            <person name="Abola P."/>
            <person name="Ampe F."/>
            <person name="Barloy-Hubler F."/>
            <person name="Barnett M.J."/>
            <person name="Becker A."/>
            <person name="Boistard P."/>
            <person name="Bothe G."/>
            <person name="Boutry M."/>
            <person name="Bowser L."/>
            <person name="Buhrmester J."/>
            <person name="Cadieu E."/>
            <person name="Capela D."/>
            <person name="Chain P."/>
            <person name="Cowie A."/>
            <person name="Davis R.W."/>
            <person name="Dreano S."/>
            <person name="Federspiel N.A."/>
            <person name="Fisher R.F."/>
            <person name="Gloux S."/>
            <person name="Godrie T."/>
            <person name="Goffeau A."/>
            <person name="Golding B."/>
            <person name="Gouzy J."/>
            <person name="Gurjal M."/>
            <person name="Hernandez-Lucas I."/>
            <person name="Hong A."/>
            <person name="Huizar L."/>
            <person name="Hyman R.W."/>
            <person name="Jones T."/>
            <person name="Kahn D."/>
            <person name="Kahn M.L."/>
            <person name="Kalman S."/>
            <person name="Keating D.H."/>
            <person name="Kiss E."/>
            <person name="Komp C."/>
            <person name="Lelaure V."/>
            <person name="Masuy D."/>
            <person name="Palm C."/>
            <person name="Peck M.C."/>
            <person name="Pohl T.M."/>
            <person name="Portetelle D."/>
            <person name="Purnelle B."/>
            <person name="Ramsperger U."/>
            <person name="Surzycki R."/>
            <person name="Thebault P."/>
            <person name="Vandenbol M."/>
            <person name="Vorhoelter F.J."/>
            <person name="Weidner S."/>
            <person name="Wells D.H."/>
            <person name="Wong K."/>
            <person name="Yeh K.-C."/>
            <person name="Batut J."/>
        </authorList>
    </citation>
    <scope>NUCLEOTIDE SEQUENCE [LARGE SCALE GENOMIC DNA]</scope>
    <source>
        <strain>1021</strain>
    </source>
</reference>
<proteinExistence type="evidence at protein level"/>
<feature type="chain" id="PRO_0000092617" description="Beta-(1--&gt;2)glucan export ATP-binding/permease protein NdvA">
    <location>
        <begin position="1"/>
        <end position="585"/>
    </location>
</feature>
<feature type="transmembrane region" description="Helical" evidence="1">
    <location>
        <begin position="22"/>
        <end position="42"/>
    </location>
</feature>
<feature type="transmembrane region" description="Helical" evidence="1">
    <location>
        <begin position="55"/>
        <end position="75"/>
    </location>
</feature>
<feature type="transmembrane region" description="Helical" evidence="1">
    <location>
        <begin position="136"/>
        <end position="156"/>
    </location>
</feature>
<feature type="transmembrane region" description="Helical" evidence="1">
    <location>
        <begin position="158"/>
        <end position="178"/>
    </location>
</feature>
<feature type="transmembrane region" description="Helical" evidence="1">
    <location>
        <begin position="245"/>
        <end position="265"/>
    </location>
</feature>
<feature type="transmembrane region" description="Helical" evidence="1">
    <location>
        <begin position="269"/>
        <end position="289"/>
    </location>
</feature>
<feature type="domain" description="ABC transmembrane type-1" evidence="1">
    <location>
        <begin position="21"/>
        <end position="301"/>
    </location>
</feature>
<feature type="domain" description="ABC transporter" evidence="1">
    <location>
        <begin position="335"/>
        <end position="569"/>
    </location>
</feature>
<feature type="binding site" evidence="1">
    <location>
        <begin position="368"/>
        <end position="375"/>
    </location>
    <ligand>
        <name>ATP</name>
        <dbReference type="ChEBI" id="CHEBI:30616"/>
    </ligand>
</feature>
<organism>
    <name type="scientific">Rhizobium meliloti (strain 1021)</name>
    <name type="common">Ensifer meliloti</name>
    <name type="synonym">Sinorhizobium meliloti</name>
    <dbReference type="NCBI Taxonomy" id="266834"/>
    <lineage>
        <taxon>Bacteria</taxon>
        <taxon>Pseudomonadati</taxon>
        <taxon>Pseudomonadota</taxon>
        <taxon>Alphaproteobacteria</taxon>
        <taxon>Hyphomicrobiales</taxon>
        <taxon>Rhizobiaceae</taxon>
        <taxon>Sinorhizobium/Ensifer group</taxon>
        <taxon>Sinorhizobium</taxon>
    </lineage>
</organism>
<keyword id="KW-0067">ATP-binding</keyword>
<keyword id="KW-0997">Cell inner membrane</keyword>
<keyword id="KW-1003">Cell membrane</keyword>
<keyword id="KW-0472">Membrane</keyword>
<keyword id="KW-0547">Nucleotide-binding</keyword>
<keyword id="KW-1185">Reference proteome</keyword>
<keyword id="KW-0762">Sugar transport</keyword>
<keyword id="KW-1278">Translocase</keyword>
<keyword id="KW-0812">Transmembrane</keyword>
<keyword id="KW-1133">Transmembrane helix</keyword>
<keyword id="KW-0813">Transport</keyword>
<dbReference type="EC" id="7.5.2.3" evidence="1"/>
<dbReference type="EMBL" id="M20726">
    <property type="protein sequence ID" value="AAA26304.1"/>
    <property type="status" value="ALT_INIT"/>
    <property type="molecule type" value="Genomic_DNA"/>
</dbReference>
<dbReference type="EMBL" id="AL591688">
    <property type="protein sequence ID" value="CAC47862.1"/>
    <property type="status" value="ALT_INIT"/>
    <property type="molecule type" value="Genomic_DNA"/>
</dbReference>
<dbReference type="PIR" id="A31094">
    <property type="entry name" value="VXZRNA"/>
</dbReference>
<dbReference type="RefSeq" id="NP_387389.1">
    <property type="nucleotide sequence ID" value="NC_003047.1"/>
</dbReference>
<dbReference type="RefSeq" id="WP_013844932.1">
    <property type="nucleotide sequence ID" value="NC_003047.1"/>
</dbReference>
<dbReference type="SMR" id="P18767"/>
<dbReference type="TCDB" id="3.A.1.108.1">
    <property type="family name" value="the atp-binding cassette (abc) superfamily"/>
</dbReference>
<dbReference type="EnsemblBacteria" id="CAC47862">
    <property type="protein sequence ID" value="CAC47862"/>
    <property type="gene ID" value="SMc03900"/>
</dbReference>
<dbReference type="KEGG" id="sme:SMc03900"/>
<dbReference type="PATRIC" id="fig|266834.11.peg.4842"/>
<dbReference type="eggNOG" id="COG1132">
    <property type="taxonomic scope" value="Bacteria"/>
</dbReference>
<dbReference type="HOGENOM" id="CLU_000604_84_4_5"/>
<dbReference type="OrthoDB" id="9804259at2"/>
<dbReference type="Proteomes" id="UP000001976">
    <property type="component" value="Chromosome"/>
</dbReference>
<dbReference type="GO" id="GO:0005886">
    <property type="term" value="C:plasma membrane"/>
    <property type="evidence" value="ECO:0007669"/>
    <property type="project" value="UniProtKB-SubCell"/>
</dbReference>
<dbReference type="GO" id="GO:0015441">
    <property type="term" value="F:ABC-type beta-glucan transporter activity"/>
    <property type="evidence" value="ECO:0007669"/>
    <property type="project" value="UniProtKB-EC"/>
</dbReference>
<dbReference type="GO" id="GO:0015421">
    <property type="term" value="F:ABC-type oligopeptide transporter activity"/>
    <property type="evidence" value="ECO:0007669"/>
    <property type="project" value="TreeGrafter"/>
</dbReference>
<dbReference type="GO" id="GO:0005524">
    <property type="term" value="F:ATP binding"/>
    <property type="evidence" value="ECO:0007669"/>
    <property type="project" value="UniProtKB-KW"/>
</dbReference>
<dbReference type="GO" id="GO:0016887">
    <property type="term" value="F:ATP hydrolysis activity"/>
    <property type="evidence" value="ECO:0007669"/>
    <property type="project" value="InterPro"/>
</dbReference>
<dbReference type="CDD" id="cd18562">
    <property type="entry name" value="ABC_6TM_NdvA_beta-glucan_exporter_like"/>
    <property type="match status" value="1"/>
</dbReference>
<dbReference type="CDD" id="cd03254">
    <property type="entry name" value="ABCC_Glucan_exporter_like"/>
    <property type="match status" value="1"/>
</dbReference>
<dbReference type="FunFam" id="3.40.50.300:FF:000221">
    <property type="entry name" value="Multidrug ABC transporter ATP-binding protein"/>
    <property type="match status" value="1"/>
</dbReference>
<dbReference type="Gene3D" id="1.20.1560.10">
    <property type="entry name" value="ABC transporter type 1, transmembrane domain"/>
    <property type="match status" value="1"/>
</dbReference>
<dbReference type="Gene3D" id="3.40.50.300">
    <property type="entry name" value="P-loop containing nucleotide triphosphate hydrolases"/>
    <property type="match status" value="1"/>
</dbReference>
<dbReference type="InterPro" id="IPR003593">
    <property type="entry name" value="AAA+_ATPase"/>
</dbReference>
<dbReference type="InterPro" id="IPR011527">
    <property type="entry name" value="ABC1_TM_dom"/>
</dbReference>
<dbReference type="InterPro" id="IPR036640">
    <property type="entry name" value="ABC1_TM_sf"/>
</dbReference>
<dbReference type="InterPro" id="IPR003439">
    <property type="entry name" value="ABC_transporter-like_ATP-bd"/>
</dbReference>
<dbReference type="InterPro" id="IPR017871">
    <property type="entry name" value="ABC_transporter-like_CS"/>
</dbReference>
<dbReference type="InterPro" id="IPR005896">
    <property type="entry name" value="NdvA"/>
</dbReference>
<dbReference type="InterPro" id="IPR027417">
    <property type="entry name" value="P-loop_NTPase"/>
</dbReference>
<dbReference type="InterPro" id="IPR039421">
    <property type="entry name" value="Type_1_exporter"/>
</dbReference>
<dbReference type="NCBIfam" id="TIGR01192">
    <property type="entry name" value="chvA"/>
    <property type="match status" value="1"/>
</dbReference>
<dbReference type="NCBIfam" id="NF010178">
    <property type="entry name" value="PRK13657.1"/>
    <property type="match status" value="1"/>
</dbReference>
<dbReference type="PANTHER" id="PTHR43394:SF1">
    <property type="entry name" value="ATP-BINDING CASSETTE SUB-FAMILY B MEMBER 10, MITOCHONDRIAL"/>
    <property type="match status" value="1"/>
</dbReference>
<dbReference type="PANTHER" id="PTHR43394">
    <property type="entry name" value="ATP-DEPENDENT PERMEASE MDL1, MITOCHONDRIAL"/>
    <property type="match status" value="1"/>
</dbReference>
<dbReference type="Pfam" id="PF00664">
    <property type="entry name" value="ABC_membrane"/>
    <property type="match status" value="1"/>
</dbReference>
<dbReference type="Pfam" id="PF00005">
    <property type="entry name" value="ABC_tran"/>
    <property type="match status" value="1"/>
</dbReference>
<dbReference type="SMART" id="SM00382">
    <property type="entry name" value="AAA"/>
    <property type="match status" value="1"/>
</dbReference>
<dbReference type="SUPFAM" id="SSF90123">
    <property type="entry name" value="ABC transporter transmembrane region"/>
    <property type="match status" value="1"/>
</dbReference>
<dbReference type="SUPFAM" id="SSF52540">
    <property type="entry name" value="P-loop containing nucleoside triphosphate hydrolases"/>
    <property type="match status" value="1"/>
</dbReference>
<dbReference type="PROSITE" id="PS50929">
    <property type="entry name" value="ABC_TM1F"/>
    <property type="match status" value="1"/>
</dbReference>
<dbReference type="PROSITE" id="PS00211">
    <property type="entry name" value="ABC_TRANSPORTER_1"/>
    <property type="match status" value="1"/>
</dbReference>
<dbReference type="PROSITE" id="PS50893">
    <property type="entry name" value="ABC_TRANSPORTER_2"/>
    <property type="match status" value="1"/>
</dbReference>
<dbReference type="PROSITE" id="PS51317">
    <property type="entry name" value="NDVA"/>
    <property type="match status" value="1"/>
</dbReference>